<reference key="1">
    <citation type="journal article" date="2007" name="Proc. Natl. Acad. Sci. U.S.A.">
        <title>Genomic and metabolic adaptations of Methanobrevibacter smithii to the human gut.</title>
        <authorList>
            <person name="Samuel B.S."/>
            <person name="Hansen E.E."/>
            <person name="Manchester J.K."/>
            <person name="Coutinho P.M."/>
            <person name="Henrissat B."/>
            <person name="Fulton R."/>
            <person name="Latreille P."/>
            <person name="Kim K."/>
            <person name="Wilson R.K."/>
            <person name="Gordon J.I."/>
        </authorList>
    </citation>
    <scope>NUCLEOTIDE SEQUENCE [LARGE SCALE GENOMIC DNA]</scope>
    <source>
        <strain>ATCC 35061 / DSM 861 / OCM 144 / PS</strain>
    </source>
</reference>
<evidence type="ECO:0000255" key="1">
    <source>
        <dbReference type="HAMAP-Rule" id="MF_00383"/>
    </source>
</evidence>
<evidence type="ECO:0000255" key="2">
    <source>
        <dbReference type="PROSITE-ProRule" id="PRU00469"/>
    </source>
</evidence>
<proteinExistence type="inferred from homology"/>
<feature type="chain" id="PRO_1000080112" description="Transcription initiation factor IIB">
    <location>
        <begin position="1"/>
        <end position="310"/>
    </location>
</feature>
<feature type="repeat" description="1">
    <location>
        <begin position="127"/>
        <end position="210"/>
    </location>
</feature>
<feature type="repeat" description="2">
    <location>
        <begin position="221"/>
        <end position="302"/>
    </location>
</feature>
<feature type="zinc finger region" description="TFIIB-type" evidence="2">
    <location>
        <begin position="9"/>
        <end position="41"/>
    </location>
</feature>
<feature type="binding site" evidence="2">
    <location>
        <position position="14"/>
    </location>
    <ligand>
        <name>Zn(2+)</name>
        <dbReference type="ChEBI" id="CHEBI:29105"/>
    </ligand>
</feature>
<feature type="binding site" evidence="2">
    <location>
        <position position="17"/>
    </location>
    <ligand>
        <name>Zn(2+)</name>
        <dbReference type="ChEBI" id="CHEBI:29105"/>
    </ligand>
</feature>
<feature type="binding site" evidence="2">
    <location>
        <position position="33"/>
    </location>
    <ligand>
        <name>Zn(2+)</name>
        <dbReference type="ChEBI" id="CHEBI:29105"/>
    </ligand>
</feature>
<feature type="binding site" evidence="2">
    <location>
        <position position="36"/>
    </location>
    <ligand>
        <name>Zn(2+)</name>
        <dbReference type="ChEBI" id="CHEBI:29105"/>
    </ligand>
</feature>
<organism>
    <name type="scientific">Methanobrevibacter smithii (strain ATCC 35061 / DSM 861 / OCM 144 / PS)</name>
    <dbReference type="NCBI Taxonomy" id="420247"/>
    <lineage>
        <taxon>Archaea</taxon>
        <taxon>Methanobacteriati</taxon>
        <taxon>Methanobacteriota</taxon>
        <taxon>Methanomada group</taxon>
        <taxon>Methanobacteria</taxon>
        <taxon>Methanobacteriales</taxon>
        <taxon>Methanobacteriaceae</taxon>
        <taxon>Methanobrevibacter</taxon>
    </lineage>
</organism>
<keyword id="KW-0479">Metal-binding</keyword>
<keyword id="KW-0677">Repeat</keyword>
<keyword id="KW-0804">Transcription</keyword>
<keyword id="KW-0805">Transcription regulation</keyword>
<keyword id="KW-0862">Zinc</keyword>
<keyword id="KW-0863">Zinc-finger</keyword>
<sequence length="310" mass="34834">MQGDVYDKDKQTVCPECGSTELIGDYERAEVVCAHCGLVIDENLVDMGPEWRAFDHEQRDKRTRVGAPITYTIHDKGLSTMIDWRNKDIYGRDIPARNRAQWYRLRKWQRKIRISGATERNLAFALSELDRDSSRLGLPRSVREAASVVYRSAVDNKLIRGRSIEGVVAASLYAACRRCNVPRTLDEIAEVSRVTKKEVGRTYRFLTRELNIKLPPTSPVDYVPRFASELGLSGEAQSRAIEIIEKAMEKGLTSGRGPTGVAAAALYIASVLLGERKTQRDVADIAGVTEVTIRNRYKELTEQLEMGVTL</sequence>
<protein>
    <recommendedName>
        <fullName evidence="1">Transcription initiation factor IIB</fullName>
        <shortName evidence="1">TFIIB</shortName>
    </recommendedName>
</protein>
<gene>
    <name evidence="1" type="primary">tfb</name>
    <name type="ordered locus">Msm_0424</name>
</gene>
<comment type="function">
    <text evidence="1">Stabilizes TBP binding to an archaeal box-A promoter. Also responsible for recruiting RNA polymerase II to the pre-initiation complex (DNA-TBP-TFIIB).</text>
</comment>
<comment type="similarity">
    <text evidence="1">Belongs to the TFIIB family.</text>
</comment>
<accession>A5UKA1</accession>
<name>TF2B_METS3</name>
<dbReference type="EMBL" id="CP000678">
    <property type="protein sequence ID" value="ABQ86629.1"/>
    <property type="molecule type" value="Genomic_DNA"/>
</dbReference>
<dbReference type="RefSeq" id="WP_004032173.1">
    <property type="nucleotide sequence ID" value="NZ_CP117965.1"/>
</dbReference>
<dbReference type="SMR" id="A5UKA1"/>
<dbReference type="STRING" id="420247.Msm_0424"/>
<dbReference type="EnsemblBacteria" id="ABQ86629">
    <property type="protein sequence ID" value="ABQ86629"/>
    <property type="gene ID" value="Msm_0424"/>
</dbReference>
<dbReference type="KEGG" id="msi:Msm_0424"/>
<dbReference type="PATRIC" id="fig|420247.28.peg.426"/>
<dbReference type="eggNOG" id="arCOG01981">
    <property type="taxonomic scope" value="Archaea"/>
</dbReference>
<dbReference type="HOGENOM" id="CLU_043736_0_0_2"/>
<dbReference type="Proteomes" id="UP000001992">
    <property type="component" value="Chromosome"/>
</dbReference>
<dbReference type="GO" id="GO:0097550">
    <property type="term" value="C:transcription preinitiation complex"/>
    <property type="evidence" value="ECO:0007669"/>
    <property type="project" value="TreeGrafter"/>
</dbReference>
<dbReference type="GO" id="GO:0003700">
    <property type="term" value="F:DNA-binding transcription factor activity"/>
    <property type="evidence" value="ECO:0007669"/>
    <property type="project" value="UniProtKB-UniRule"/>
</dbReference>
<dbReference type="GO" id="GO:0017025">
    <property type="term" value="F:TBP-class protein binding"/>
    <property type="evidence" value="ECO:0007669"/>
    <property type="project" value="InterPro"/>
</dbReference>
<dbReference type="GO" id="GO:0008270">
    <property type="term" value="F:zinc ion binding"/>
    <property type="evidence" value="ECO:0007669"/>
    <property type="project" value="UniProtKB-UniRule"/>
</dbReference>
<dbReference type="GO" id="GO:0070897">
    <property type="term" value="P:transcription preinitiation complex assembly"/>
    <property type="evidence" value="ECO:0007669"/>
    <property type="project" value="InterPro"/>
</dbReference>
<dbReference type="CDD" id="cd20549">
    <property type="entry name" value="CYCLIN_TFIIB_archaea_like_rpt1"/>
    <property type="match status" value="1"/>
</dbReference>
<dbReference type="CDD" id="cd20550">
    <property type="entry name" value="CYCLIN_TFIIB_archaea_like_rpt2"/>
    <property type="match status" value="1"/>
</dbReference>
<dbReference type="FunFam" id="1.10.472.10:FF:000023">
    <property type="entry name" value="Transcription initiation factor IIB"/>
    <property type="match status" value="1"/>
</dbReference>
<dbReference type="FunFam" id="1.10.472.170:FF:000001">
    <property type="entry name" value="Transcription initiation factor IIB"/>
    <property type="match status" value="1"/>
</dbReference>
<dbReference type="Gene3D" id="1.10.472.170">
    <property type="match status" value="1"/>
</dbReference>
<dbReference type="Gene3D" id="1.10.472.10">
    <property type="entry name" value="Cyclin-like"/>
    <property type="match status" value="1"/>
</dbReference>
<dbReference type="HAMAP" id="MF_00383">
    <property type="entry name" value="TF2B_arch"/>
    <property type="match status" value="1"/>
</dbReference>
<dbReference type="InterPro" id="IPR013763">
    <property type="entry name" value="Cyclin-like_dom"/>
</dbReference>
<dbReference type="InterPro" id="IPR036915">
    <property type="entry name" value="Cyclin-like_sf"/>
</dbReference>
<dbReference type="InterPro" id="IPR000812">
    <property type="entry name" value="TFIIB"/>
</dbReference>
<dbReference type="InterPro" id="IPR023484">
    <property type="entry name" value="TFIIB_arc"/>
</dbReference>
<dbReference type="InterPro" id="IPR023486">
    <property type="entry name" value="TFIIB_CS"/>
</dbReference>
<dbReference type="InterPro" id="IPR013150">
    <property type="entry name" value="TFIIB_cyclin"/>
</dbReference>
<dbReference type="InterPro" id="IPR013137">
    <property type="entry name" value="Znf_TFIIB"/>
</dbReference>
<dbReference type="NCBIfam" id="NF001658">
    <property type="entry name" value="PRK00423.1"/>
    <property type="match status" value="1"/>
</dbReference>
<dbReference type="PANTHER" id="PTHR11618:SF13">
    <property type="entry name" value="TRANSCRIPTION INITIATION FACTOR IIB"/>
    <property type="match status" value="1"/>
</dbReference>
<dbReference type="PANTHER" id="PTHR11618">
    <property type="entry name" value="TRANSCRIPTION INITIATION FACTOR IIB-RELATED"/>
    <property type="match status" value="1"/>
</dbReference>
<dbReference type="Pfam" id="PF00382">
    <property type="entry name" value="TFIIB"/>
    <property type="match status" value="2"/>
</dbReference>
<dbReference type="Pfam" id="PF08271">
    <property type="entry name" value="Zn_Ribbon_TF"/>
    <property type="match status" value="1"/>
</dbReference>
<dbReference type="PRINTS" id="PR00685">
    <property type="entry name" value="TIFACTORIIB"/>
</dbReference>
<dbReference type="SMART" id="SM00385">
    <property type="entry name" value="CYCLIN"/>
    <property type="match status" value="2"/>
</dbReference>
<dbReference type="SUPFAM" id="SSF47954">
    <property type="entry name" value="Cyclin-like"/>
    <property type="match status" value="2"/>
</dbReference>
<dbReference type="SUPFAM" id="SSF57783">
    <property type="entry name" value="Zinc beta-ribbon"/>
    <property type="match status" value="1"/>
</dbReference>
<dbReference type="PROSITE" id="PS00782">
    <property type="entry name" value="TFIIB"/>
    <property type="match status" value="2"/>
</dbReference>
<dbReference type="PROSITE" id="PS51134">
    <property type="entry name" value="ZF_TFIIB"/>
    <property type="match status" value="1"/>
</dbReference>